<feature type="chain" id="PRO_0000376125" description="NADH-quinone oxidoreductase subunit B">
    <location>
        <begin position="1"/>
        <end position="171"/>
    </location>
</feature>
<feature type="binding site" evidence="1">
    <location>
        <position position="39"/>
    </location>
    <ligand>
        <name>[4Fe-4S] cluster</name>
        <dbReference type="ChEBI" id="CHEBI:49883"/>
    </ligand>
</feature>
<feature type="binding site" evidence="1">
    <location>
        <position position="40"/>
    </location>
    <ligand>
        <name>[4Fe-4S] cluster</name>
        <dbReference type="ChEBI" id="CHEBI:49883"/>
    </ligand>
</feature>
<feature type="binding site" evidence="1">
    <location>
        <position position="105"/>
    </location>
    <ligand>
        <name>[4Fe-4S] cluster</name>
        <dbReference type="ChEBI" id="CHEBI:49883"/>
    </ligand>
</feature>
<feature type="binding site" evidence="1">
    <location>
        <position position="134"/>
    </location>
    <ligand>
        <name>[4Fe-4S] cluster</name>
        <dbReference type="ChEBI" id="CHEBI:49883"/>
    </ligand>
</feature>
<reference key="1">
    <citation type="journal article" date="2007" name="PLoS ONE">
        <title>The complete genome sequence and analysis of the Epsilonproteobacterium Arcobacter butzleri.</title>
        <authorList>
            <person name="Miller W.G."/>
            <person name="Parker C.T."/>
            <person name="Rubenfield M."/>
            <person name="Mendz G.L."/>
            <person name="Woesten M.M.S.M."/>
            <person name="Ussery D.W."/>
            <person name="Stolz J.F."/>
            <person name="Binnewies T.T."/>
            <person name="Hallin P.F."/>
            <person name="Wang G."/>
            <person name="Malek J.A."/>
            <person name="Rogosin A."/>
            <person name="Stanker L.H."/>
            <person name="Mandrell R.E."/>
        </authorList>
    </citation>
    <scope>NUCLEOTIDE SEQUENCE [LARGE SCALE GENOMIC DNA]</scope>
    <source>
        <strain>RM4018</strain>
    </source>
</reference>
<proteinExistence type="inferred from homology"/>
<sequence>MGLGVESKLGDSIVTTRLDHAVNWGRSYSLWPMAFGTACCGIEFMAVAGAKYDVSRFGAEVVRFSPRQADLLIVAGTISYKQAPILKKIYEQMCEPKWVISMGACACSGGFYDNYTTVQGIDEIIPVDEYVAGCPPRPEAVLDAIMRIQEKAKTESIIKDRVKEYKGFLDA</sequence>
<comment type="function">
    <text evidence="1">NDH-1 shuttles electrons from NADH, via FMN and iron-sulfur (Fe-S) centers, to quinones in the respiratory chain. The immediate electron acceptor for the enzyme in this species is believed to be ubiquinone. Couples the redox reaction to proton translocation (for every two electrons transferred, four hydrogen ions are translocated across the cytoplasmic membrane), and thus conserves the redox energy in a proton gradient.</text>
</comment>
<comment type="catalytic activity">
    <reaction evidence="1">
        <text>a quinone + NADH + 5 H(+)(in) = a quinol + NAD(+) + 4 H(+)(out)</text>
        <dbReference type="Rhea" id="RHEA:57888"/>
        <dbReference type="ChEBI" id="CHEBI:15378"/>
        <dbReference type="ChEBI" id="CHEBI:24646"/>
        <dbReference type="ChEBI" id="CHEBI:57540"/>
        <dbReference type="ChEBI" id="CHEBI:57945"/>
        <dbReference type="ChEBI" id="CHEBI:132124"/>
    </reaction>
</comment>
<comment type="cofactor">
    <cofactor evidence="1">
        <name>[4Fe-4S] cluster</name>
        <dbReference type="ChEBI" id="CHEBI:49883"/>
    </cofactor>
    <text evidence="1">Binds 1 [4Fe-4S] cluster.</text>
</comment>
<comment type="subunit">
    <text evidence="1">NDH-1 is composed of 14 different subunits. Subunits NuoB, C, D, E, F, and G constitute the peripheral sector of the complex.</text>
</comment>
<comment type="subcellular location">
    <subcellularLocation>
        <location evidence="1">Cell inner membrane</location>
        <topology evidence="1">Peripheral membrane protein</topology>
        <orientation evidence="1">Cytoplasmic side</orientation>
    </subcellularLocation>
</comment>
<comment type="similarity">
    <text evidence="1">Belongs to the complex I 20 kDa subunit family.</text>
</comment>
<organism>
    <name type="scientific">Aliarcobacter butzleri (strain RM4018)</name>
    <name type="common">Arcobacter butzleri</name>
    <dbReference type="NCBI Taxonomy" id="367737"/>
    <lineage>
        <taxon>Bacteria</taxon>
        <taxon>Pseudomonadati</taxon>
        <taxon>Campylobacterota</taxon>
        <taxon>Epsilonproteobacteria</taxon>
        <taxon>Campylobacterales</taxon>
        <taxon>Arcobacteraceae</taxon>
        <taxon>Aliarcobacter</taxon>
    </lineage>
</organism>
<protein>
    <recommendedName>
        <fullName evidence="1">NADH-quinone oxidoreductase subunit B</fullName>
        <ecNumber evidence="1">7.1.1.-</ecNumber>
    </recommendedName>
    <alternativeName>
        <fullName evidence="1">NADH dehydrogenase I subunit B</fullName>
    </alternativeName>
    <alternativeName>
        <fullName evidence="1">NDH-1 subunit B</fullName>
    </alternativeName>
</protein>
<gene>
    <name evidence="1" type="primary">nuoB</name>
    <name type="ordered locus">Abu_0314</name>
</gene>
<accession>A8ERL5</accession>
<dbReference type="EC" id="7.1.1.-" evidence="1"/>
<dbReference type="EMBL" id="CP000361">
    <property type="protein sequence ID" value="ABV66589.1"/>
    <property type="molecule type" value="Genomic_DNA"/>
</dbReference>
<dbReference type="RefSeq" id="WP_004510372.1">
    <property type="nucleotide sequence ID" value="NC_009850.1"/>
</dbReference>
<dbReference type="SMR" id="A8ERL5"/>
<dbReference type="STRING" id="367737.Abu_0314"/>
<dbReference type="GeneID" id="24304616"/>
<dbReference type="KEGG" id="abu:Abu_0314"/>
<dbReference type="eggNOG" id="COG0377">
    <property type="taxonomic scope" value="Bacteria"/>
</dbReference>
<dbReference type="HOGENOM" id="CLU_055737_7_3_7"/>
<dbReference type="Proteomes" id="UP000001136">
    <property type="component" value="Chromosome"/>
</dbReference>
<dbReference type="GO" id="GO:0005886">
    <property type="term" value="C:plasma membrane"/>
    <property type="evidence" value="ECO:0007669"/>
    <property type="project" value="UniProtKB-SubCell"/>
</dbReference>
<dbReference type="GO" id="GO:0045271">
    <property type="term" value="C:respiratory chain complex I"/>
    <property type="evidence" value="ECO:0007669"/>
    <property type="project" value="TreeGrafter"/>
</dbReference>
<dbReference type="GO" id="GO:0051539">
    <property type="term" value="F:4 iron, 4 sulfur cluster binding"/>
    <property type="evidence" value="ECO:0007669"/>
    <property type="project" value="UniProtKB-KW"/>
</dbReference>
<dbReference type="GO" id="GO:0005506">
    <property type="term" value="F:iron ion binding"/>
    <property type="evidence" value="ECO:0007669"/>
    <property type="project" value="UniProtKB-UniRule"/>
</dbReference>
<dbReference type="GO" id="GO:0008137">
    <property type="term" value="F:NADH dehydrogenase (ubiquinone) activity"/>
    <property type="evidence" value="ECO:0007669"/>
    <property type="project" value="InterPro"/>
</dbReference>
<dbReference type="GO" id="GO:0050136">
    <property type="term" value="F:NADH:ubiquinone reductase (non-electrogenic) activity"/>
    <property type="evidence" value="ECO:0007669"/>
    <property type="project" value="UniProtKB-UniRule"/>
</dbReference>
<dbReference type="GO" id="GO:0048038">
    <property type="term" value="F:quinone binding"/>
    <property type="evidence" value="ECO:0007669"/>
    <property type="project" value="UniProtKB-KW"/>
</dbReference>
<dbReference type="GO" id="GO:0009060">
    <property type="term" value="P:aerobic respiration"/>
    <property type="evidence" value="ECO:0007669"/>
    <property type="project" value="TreeGrafter"/>
</dbReference>
<dbReference type="GO" id="GO:0015990">
    <property type="term" value="P:electron transport coupled proton transport"/>
    <property type="evidence" value="ECO:0007669"/>
    <property type="project" value="TreeGrafter"/>
</dbReference>
<dbReference type="FunFam" id="3.40.50.12280:FF:000002">
    <property type="entry name" value="NADH-quinone oxidoreductase subunit B"/>
    <property type="match status" value="1"/>
</dbReference>
<dbReference type="Gene3D" id="3.40.50.12280">
    <property type="match status" value="1"/>
</dbReference>
<dbReference type="HAMAP" id="MF_01356">
    <property type="entry name" value="NDH1_NuoB"/>
    <property type="match status" value="1"/>
</dbReference>
<dbReference type="InterPro" id="IPR006137">
    <property type="entry name" value="NADH_UbQ_OxRdtase-like_20kDa"/>
</dbReference>
<dbReference type="InterPro" id="IPR006138">
    <property type="entry name" value="NADH_UQ_OxRdtase_20Kd_su"/>
</dbReference>
<dbReference type="NCBIfam" id="TIGR01957">
    <property type="entry name" value="nuoB_fam"/>
    <property type="match status" value="1"/>
</dbReference>
<dbReference type="NCBIfam" id="NF005012">
    <property type="entry name" value="PRK06411.1"/>
    <property type="match status" value="1"/>
</dbReference>
<dbReference type="PANTHER" id="PTHR11995">
    <property type="entry name" value="NADH DEHYDROGENASE"/>
    <property type="match status" value="1"/>
</dbReference>
<dbReference type="PANTHER" id="PTHR11995:SF14">
    <property type="entry name" value="NADH DEHYDROGENASE [UBIQUINONE] IRON-SULFUR PROTEIN 7, MITOCHONDRIAL"/>
    <property type="match status" value="1"/>
</dbReference>
<dbReference type="Pfam" id="PF01058">
    <property type="entry name" value="Oxidored_q6"/>
    <property type="match status" value="1"/>
</dbReference>
<dbReference type="SUPFAM" id="SSF56770">
    <property type="entry name" value="HydA/Nqo6-like"/>
    <property type="match status" value="1"/>
</dbReference>
<name>NUOB_ALIB4</name>
<evidence type="ECO:0000255" key="1">
    <source>
        <dbReference type="HAMAP-Rule" id="MF_01356"/>
    </source>
</evidence>
<keyword id="KW-0004">4Fe-4S</keyword>
<keyword id="KW-0997">Cell inner membrane</keyword>
<keyword id="KW-1003">Cell membrane</keyword>
<keyword id="KW-0408">Iron</keyword>
<keyword id="KW-0411">Iron-sulfur</keyword>
<keyword id="KW-0472">Membrane</keyword>
<keyword id="KW-0479">Metal-binding</keyword>
<keyword id="KW-0520">NAD</keyword>
<keyword id="KW-0874">Quinone</keyword>
<keyword id="KW-1185">Reference proteome</keyword>
<keyword id="KW-1278">Translocase</keyword>
<keyword id="KW-0813">Transport</keyword>
<keyword id="KW-0830">Ubiquinone</keyword>